<proteinExistence type="evidence at protein level"/>
<accession>F4IUY8</accession>
<accession>O80947</accession>
<accession>Q56W50</accession>
<reference key="1">
    <citation type="journal article" date="1999" name="Nature">
        <title>Sequence and analysis of chromosome 2 of the plant Arabidopsis thaliana.</title>
        <authorList>
            <person name="Lin X."/>
            <person name="Kaul S."/>
            <person name="Rounsley S.D."/>
            <person name="Shea T.P."/>
            <person name="Benito M.-I."/>
            <person name="Town C.D."/>
            <person name="Fujii C.Y."/>
            <person name="Mason T.M."/>
            <person name="Bowman C.L."/>
            <person name="Barnstead M.E."/>
            <person name="Feldblyum T.V."/>
            <person name="Buell C.R."/>
            <person name="Ketchum K.A."/>
            <person name="Lee J.J."/>
            <person name="Ronning C.M."/>
            <person name="Koo H.L."/>
            <person name="Moffat K.S."/>
            <person name="Cronin L.A."/>
            <person name="Shen M."/>
            <person name="Pai G."/>
            <person name="Van Aken S."/>
            <person name="Umayam L."/>
            <person name="Tallon L.J."/>
            <person name="Gill J.E."/>
            <person name="Adams M.D."/>
            <person name="Carrera A.J."/>
            <person name="Creasy T.H."/>
            <person name="Goodman H.M."/>
            <person name="Somerville C.R."/>
            <person name="Copenhaver G.P."/>
            <person name="Preuss D."/>
            <person name="Nierman W.C."/>
            <person name="White O."/>
            <person name="Eisen J.A."/>
            <person name="Salzberg S.L."/>
            <person name="Fraser C.M."/>
            <person name="Venter J.C."/>
        </authorList>
    </citation>
    <scope>NUCLEOTIDE SEQUENCE [LARGE SCALE GENOMIC DNA]</scope>
    <source>
        <strain>cv. Columbia</strain>
    </source>
</reference>
<reference key="2">
    <citation type="journal article" date="2017" name="Plant J.">
        <title>Araport11: a complete reannotation of the Arabidopsis thaliana reference genome.</title>
        <authorList>
            <person name="Cheng C.Y."/>
            <person name="Krishnakumar V."/>
            <person name="Chan A.P."/>
            <person name="Thibaud-Nissen F."/>
            <person name="Schobel S."/>
            <person name="Town C.D."/>
        </authorList>
    </citation>
    <scope>GENOME REANNOTATION</scope>
    <source>
        <strain>cv. Columbia</strain>
    </source>
</reference>
<reference key="3">
    <citation type="submission" date="2005-03" db="EMBL/GenBank/DDBJ databases">
        <title>Large-scale analysis of RIKEN Arabidopsis full-length (RAFL) cDNAs.</title>
        <authorList>
            <person name="Totoki Y."/>
            <person name="Seki M."/>
            <person name="Ishida J."/>
            <person name="Nakajima M."/>
            <person name="Enju A."/>
            <person name="Kamiya A."/>
            <person name="Narusaka M."/>
            <person name="Shin-i T."/>
            <person name="Nakagawa M."/>
            <person name="Sakamoto N."/>
            <person name="Oishi K."/>
            <person name="Kohara Y."/>
            <person name="Kobayashi M."/>
            <person name="Toyoda A."/>
            <person name="Sakaki Y."/>
            <person name="Sakurai T."/>
            <person name="Iida K."/>
            <person name="Akiyama K."/>
            <person name="Satou M."/>
            <person name="Toyoda T."/>
            <person name="Konagaya A."/>
            <person name="Carninci P."/>
            <person name="Kawai J."/>
            <person name="Hayashizaki Y."/>
            <person name="Shinozaki K."/>
        </authorList>
    </citation>
    <scope>NUCLEOTIDE SEQUENCE [LARGE SCALE MRNA] OF 509-1006</scope>
    <source>
        <strain>cv. Columbia</strain>
    </source>
</reference>
<reference key="4">
    <citation type="journal article" date="2010" name="Plant J.">
        <title>Arabidopsis homolog of the yeast TREX-2 mRNA export complex: components and anchoring nucleoporin.</title>
        <authorList>
            <person name="Lu Q."/>
            <person name="Tang X."/>
            <person name="Tian G."/>
            <person name="Wang F."/>
            <person name="Liu K."/>
            <person name="Nguyen V."/>
            <person name="Kohalmi S.E."/>
            <person name="Keller W.A."/>
            <person name="Tsang E.W."/>
            <person name="Harada J.J."/>
            <person name="Rothstein S.J."/>
            <person name="Cui Y."/>
        </authorList>
    </citation>
    <scope>INTERACTION WITH EER5; SAC3B AND CML20</scope>
    <scope>SUBCELLULAR LOCATION</scope>
    <scope>DISRUPTION PHENOTYPE</scope>
    <scope>FUNCTION</scope>
</reference>
<name>SAC3A_ARATH</name>
<gene>
    <name evidence="4" type="primary">SAC3A</name>
    <name evidence="6" type="ordered locus">At2g39340</name>
    <name evidence="7" type="ORF">T16B24.2</name>
</gene>
<feature type="chain" id="PRO_0000435403" description="SAC3 family protein A">
    <location>
        <begin position="1"/>
        <end position="1006"/>
    </location>
</feature>
<feature type="domain" description="PCI" evidence="1">
    <location>
        <begin position="804"/>
        <end position="978"/>
    </location>
</feature>
<feature type="region of interest" description="Disordered" evidence="2">
    <location>
        <begin position="1"/>
        <end position="75"/>
    </location>
</feature>
<feature type="region of interest" description="Disordered" evidence="2">
    <location>
        <begin position="106"/>
        <end position="162"/>
    </location>
</feature>
<feature type="region of interest" description="Disordered" evidence="2">
    <location>
        <begin position="183"/>
        <end position="239"/>
    </location>
</feature>
<feature type="region of interest" description="Disordered" evidence="2">
    <location>
        <begin position="266"/>
        <end position="326"/>
    </location>
</feature>
<feature type="region of interest" description="Disordered" evidence="2">
    <location>
        <begin position="516"/>
        <end position="550"/>
    </location>
</feature>
<feature type="region of interest" description="Disordered" evidence="2">
    <location>
        <begin position="595"/>
        <end position="638"/>
    </location>
</feature>
<feature type="region of interest" description="Disordered" evidence="2">
    <location>
        <begin position="650"/>
        <end position="690"/>
    </location>
</feature>
<feature type="compositionally biased region" description="Polar residues" evidence="2">
    <location>
        <begin position="26"/>
        <end position="75"/>
    </location>
</feature>
<feature type="compositionally biased region" description="Polar residues" evidence="2">
    <location>
        <begin position="106"/>
        <end position="115"/>
    </location>
</feature>
<feature type="compositionally biased region" description="Low complexity" evidence="2">
    <location>
        <begin position="116"/>
        <end position="140"/>
    </location>
</feature>
<feature type="compositionally biased region" description="Polar residues" evidence="2">
    <location>
        <begin position="144"/>
        <end position="162"/>
    </location>
</feature>
<feature type="compositionally biased region" description="Polar residues" evidence="2">
    <location>
        <begin position="269"/>
        <end position="282"/>
    </location>
</feature>
<feature type="compositionally biased region" description="Polar residues" evidence="2">
    <location>
        <begin position="313"/>
        <end position="326"/>
    </location>
</feature>
<feature type="compositionally biased region" description="Low complexity" evidence="2">
    <location>
        <begin position="516"/>
        <end position="539"/>
    </location>
</feature>
<feature type="compositionally biased region" description="Basic residues" evidence="2">
    <location>
        <begin position="609"/>
        <end position="618"/>
    </location>
</feature>
<feature type="compositionally biased region" description="Basic and acidic residues" evidence="2">
    <location>
        <begin position="653"/>
        <end position="680"/>
    </location>
</feature>
<feature type="sequence conflict" description="In Ref. 3; BAD95343." evidence="5" ref="3">
    <original>N</original>
    <variation>D</variation>
    <location>
        <position position="785"/>
    </location>
</feature>
<sequence>MNHGGNTQAVAPMDPNSIENRYGVDGSQTQKYSYQYSTGSESAPWTGHSVENQAVENGNYSNSNYYHPQPTGPATGNVQEIPNTVSFTISSTSGTANVAQDYSGYTPYQTSSDPHNYSNTGYSNYYSGYQQQPSQSYPQPVGAYQNTGAPQPLSSFQNPGSYAGTPSYSGTYYNPADYQTAGGYQSTNYNNQTAGSYPSTNYSNQTPASNQGNYTDYTSNPYQNYTPDAANTHSSTIATTPPVHYQQNYQQWTEYYSQTEVPCAPGTEKLSTPTTSAYSQSFPVPGVTSEMPASNSQPAPSYVQPWRPETDSSHPPSQQPGAAVSTSNDTYWMHQAPSLQAHHPVPPQNNYQSPLETKPLYETPFQGHQRATYPQEMNSQSSFHQAPLGYRQPTQTAPLVDSQRVSKVQIPTNPRIASNLPSGFTKMDKDSTAASAAQAPAYVSVSMPKPKDHTTAMSDPGTFPKSLRGFVERAFARCKDDKEKESCEVALRKIVKKAKEDNTLYTRDWDTEPLSTVTTTNVTNSESSSAQLSSLQNKSPTRRPKSRWEPLVEGKPFVKPASTFSSAVKFGVWNHQNENNKKSSESFQKVDAATGFKPTYSGQNSAKKSFQRPVKRQRFSGGAATAIDDEASSDSDKDLTPYYSSAMALAGSAEEKKRRDSRSKRFEKIQGHSRGNDLTKPKNANVGNLHSRRATALRLSKVFDESGSRAVEDIDWDALTVKGTCQEIEKRYLRLTSAPDPATVRPEDVLEKALIMVQDSQKNYLFKCDQLKSIRQDLTVQRIHNHLTAKVYETHARLALEAGDLPEYNQCLSQLKTLYAEGVEGCSLEFAAYSLLYITLHSNNNRELLSSMSRLSEEDKKDEAVRHALSVRAAVTSGNYVMFFRLYKTAPNMNSCLMDLYVEKMRYKAVNFMSRSCRPTIPVSYIVQVLGFTGAASEGTDEKETDGMEDCLEWLKTHGANIITDSNGDMLLDTKATSTSLFMPEPEDAVAHGDRNLDVNDFFTRT</sequence>
<protein>
    <recommendedName>
        <fullName evidence="4">SAC3 family protein A</fullName>
    </recommendedName>
</protein>
<keyword id="KW-0539">Nucleus</keyword>
<keyword id="KW-1185">Reference proteome</keyword>
<evidence type="ECO:0000255" key="1">
    <source>
        <dbReference type="PROSITE-ProRule" id="PRU01185"/>
    </source>
</evidence>
<evidence type="ECO:0000256" key="2">
    <source>
        <dbReference type="SAM" id="MobiDB-lite"/>
    </source>
</evidence>
<evidence type="ECO:0000269" key="3">
    <source>
    </source>
</evidence>
<evidence type="ECO:0000303" key="4">
    <source>
    </source>
</evidence>
<evidence type="ECO:0000305" key="5"/>
<evidence type="ECO:0000312" key="6">
    <source>
        <dbReference type="Araport" id="AT2G39340"/>
    </source>
</evidence>
<evidence type="ECO:0000312" key="7">
    <source>
        <dbReference type="EMBL" id="AAC28976.1"/>
    </source>
</evidence>
<evidence type="ECO:0000312" key="8">
    <source>
        <dbReference type="Proteomes" id="UP000006548"/>
    </source>
</evidence>
<comment type="function">
    <text evidence="3">Component of the TREX-2 complex (transcription and export complex 2), a muliprotein complex that functions in docking export-competent ribonucleoprotein particles (mRNPs) to the nuclear entrance of the nuclear pore complex (nuclear basket). TREX-2 participates in mRNA export and accurate chromatin positioning in the nucleus by tethering genes to the nuclear periphery (PubMed:19843313).</text>
</comment>
<comment type="subunit">
    <text evidence="3">Interacts with EER5, SAC3B and CML20.</text>
</comment>
<comment type="interaction">
    <interactant intactId="EBI-2619722">
        <id>F4IUY8</id>
    </interactant>
    <interactant intactId="EBI-2619706">
        <id>Q8GWE6</id>
        <label>EER5</label>
    </interactant>
    <organismsDiffer>false</organismsDiffer>
    <experiments>3</experiments>
</comment>
<comment type="subcellular location">
    <subcellularLocation>
        <location evidence="3">Nucleus</location>
    </subcellularLocation>
</comment>
<comment type="disruption phenotype">
    <text evidence="3">No visible phenotype. Sac3a, sac3b and sac3c triple mutants show no visible phenotype.</text>
</comment>
<comment type="similarity">
    <text evidence="5">Belongs to the SAC3 family.</text>
</comment>
<comment type="sequence caution" evidence="5">
    <conflict type="erroneous gene model prediction">
        <sequence resource="EMBL-CDS" id="AAC28976"/>
    </conflict>
</comment>
<dbReference type="EMBL" id="AC004697">
    <property type="protein sequence ID" value="AAC28976.1"/>
    <property type="status" value="ALT_SEQ"/>
    <property type="molecule type" value="Genomic_DNA"/>
</dbReference>
<dbReference type="EMBL" id="CP002685">
    <property type="protein sequence ID" value="AEC09663.1"/>
    <property type="molecule type" value="Genomic_DNA"/>
</dbReference>
<dbReference type="EMBL" id="AK222197">
    <property type="protein sequence ID" value="BAD95343.1"/>
    <property type="molecule type" value="mRNA"/>
</dbReference>
<dbReference type="PIR" id="T02568">
    <property type="entry name" value="T02568"/>
</dbReference>
<dbReference type="RefSeq" id="NP_181466.2">
    <property type="nucleotide sequence ID" value="NM_129491.5"/>
</dbReference>
<dbReference type="SMR" id="F4IUY8"/>
<dbReference type="FunCoup" id="F4IUY8">
    <property type="interactions" value="3397"/>
</dbReference>
<dbReference type="IntAct" id="F4IUY8">
    <property type="interactions" value="3"/>
</dbReference>
<dbReference type="STRING" id="3702.F4IUY8"/>
<dbReference type="GlyGen" id="F4IUY8">
    <property type="glycosylation" value="2 sites"/>
</dbReference>
<dbReference type="PaxDb" id="3702-AT2G39340.1"/>
<dbReference type="ProteomicsDB" id="232683"/>
<dbReference type="EnsemblPlants" id="AT2G39340.1">
    <property type="protein sequence ID" value="AT2G39340.1"/>
    <property type="gene ID" value="AT2G39340"/>
</dbReference>
<dbReference type="GeneID" id="818519"/>
<dbReference type="Gramene" id="AT2G39340.1">
    <property type="protein sequence ID" value="AT2G39340.1"/>
    <property type="gene ID" value="AT2G39340"/>
</dbReference>
<dbReference type="KEGG" id="ath:AT2G39340"/>
<dbReference type="Araport" id="AT2G39340"/>
<dbReference type="TAIR" id="AT2G39340">
    <property type="gene designation" value="SAC3A"/>
</dbReference>
<dbReference type="eggNOG" id="KOG1861">
    <property type="taxonomic scope" value="Eukaryota"/>
</dbReference>
<dbReference type="HOGENOM" id="CLU_015513_3_0_1"/>
<dbReference type="InParanoid" id="F4IUY8"/>
<dbReference type="OMA" id="TSLYMPE"/>
<dbReference type="PRO" id="PR:F4IUY8"/>
<dbReference type="Proteomes" id="UP000006548">
    <property type="component" value="Chromosome 2"/>
</dbReference>
<dbReference type="ExpressionAtlas" id="F4IUY8">
    <property type="expression patterns" value="baseline and differential"/>
</dbReference>
<dbReference type="GO" id="GO:0005634">
    <property type="term" value="C:nucleus"/>
    <property type="evidence" value="ECO:0000314"/>
    <property type="project" value="TAIR"/>
</dbReference>
<dbReference type="GO" id="GO:0000380">
    <property type="term" value="P:alternative mRNA splicing, via spliceosome"/>
    <property type="evidence" value="ECO:0000315"/>
    <property type="project" value="TAIR"/>
</dbReference>
<dbReference type="GO" id="GO:0008380">
    <property type="term" value="P:RNA splicing"/>
    <property type="evidence" value="ECO:0000315"/>
    <property type="project" value="TAIR"/>
</dbReference>
<dbReference type="FunFam" id="1.25.40.990:FF:000005">
    <property type="entry name" value="Putative SAC3/GANP family protein"/>
    <property type="match status" value="1"/>
</dbReference>
<dbReference type="Gene3D" id="1.25.40.990">
    <property type="match status" value="1"/>
</dbReference>
<dbReference type="InterPro" id="IPR000717">
    <property type="entry name" value="PCI_dom"/>
</dbReference>
<dbReference type="InterPro" id="IPR045107">
    <property type="entry name" value="SAC3/GANP/THP3"/>
</dbReference>
<dbReference type="InterPro" id="IPR005062">
    <property type="entry name" value="SAC3/GANP/THP3_conserved"/>
</dbReference>
<dbReference type="PANTHER" id="PTHR12436">
    <property type="entry name" value="80 KDA MCM3-ASSOCIATED PROTEIN"/>
    <property type="match status" value="1"/>
</dbReference>
<dbReference type="PANTHER" id="PTHR12436:SF4">
    <property type="entry name" value="LEUKOCYTE RECEPTOR CLUSTER MEMBER 8"/>
    <property type="match status" value="1"/>
</dbReference>
<dbReference type="Pfam" id="PF03399">
    <property type="entry name" value="SAC3_GANP"/>
    <property type="match status" value="1"/>
</dbReference>
<dbReference type="SUPFAM" id="SSF55486">
    <property type="entry name" value="Metalloproteases ('zincins'), catalytic domain"/>
    <property type="match status" value="1"/>
</dbReference>
<dbReference type="PROSITE" id="PS50250">
    <property type="entry name" value="PCI"/>
    <property type="match status" value="1"/>
</dbReference>
<organism evidence="8">
    <name type="scientific">Arabidopsis thaliana</name>
    <name type="common">Mouse-ear cress</name>
    <dbReference type="NCBI Taxonomy" id="3702"/>
    <lineage>
        <taxon>Eukaryota</taxon>
        <taxon>Viridiplantae</taxon>
        <taxon>Streptophyta</taxon>
        <taxon>Embryophyta</taxon>
        <taxon>Tracheophyta</taxon>
        <taxon>Spermatophyta</taxon>
        <taxon>Magnoliopsida</taxon>
        <taxon>eudicotyledons</taxon>
        <taxon>Gunneridae</taxon>
        <taxon>Pentapetalae</taxon>
        <taxon>rosids</taxon>
        <taxon>malvids</taxon>
        <taxon>Brassicales</taxon>
        <taxon>Brassicaceae</taxon>
        <taxon>Camelineae</taxon>
        <taxon>Arabidopsis</taxon>
    </lineage>
</organism>